<dbReference type="EMBL" id="AE005174">
    <property type="protein sequence ID" value="AAG59201.1"/>
    <property type="molecule type" value="Genomic_DNA"/>
</dbReference>
<dbReference type="EMBL" id="BA000007">
    <property type="protein sequence ID" value="BAB38350.1"/>
    <property type="molecule type" value="Genomic_DNA"/>
</dbReference>
<dbReference type="PIR" id="E86092">
    <property type="entry name" value="E86092"/>
</dbReference>
<dbReference type="PIR" id="G91244">
    <property type="entry name" value="G91244"/>
</dbReference>
<dbReference type="RefSeq" id="NP_312954.1">
    <property type="nucleotide sequence ID" value="NC_002695.1"/>
</dbReference>
<dbReference type="RefSeq" id="WP_000148545.1">
    <property type="nucleotide sequence ID" value="NZ_SEKU01000031.1"/>
</dbReference>
<dbReference type="SMR" id="Q8X613"/>
<dbReference type="STRING" id="155864.Z5580"/>
<dbReference type="GeneID" id="916250"/>
<dbReference type="KEGG" id="ece:Z5580"/>
<dbReference type="KEGG" id="ecs:ECs_4927"/>
<dbReference type="PATRIC" id="fig|386585.9.peg.5153"/>
<dbReference type="eggNOG" id="COG2204">
    <property type="taxonomic scope" value="Bacteria"/>
</dbReference>
<dbReference type="HOGENOM" id="CLU_000445_0_6_6"/>
<dbReference type="OMA" id="RGWGYQV"/>
<dbReference type="Proteomes" id="UP000000558">
    <property type="component" value="Chromosome"/>
</dbReference>
<dbReference type="Proteomes" id="UP000002519">
    <property type="component" value="Chromosome"/>
</dbReference>
<dbReference type="GO" id="GO:0005737">
    <property type="term" value="C:cytoplasm"/>
    <property type="evidence" value="ECO:0007669"/>
    <property type="project" value="UniProtKB-SubCell"/>
</dbReference>
<dbReference type="GO" id="GO:0005524">
    <property type="term" value="F:ATP binding"/>
    <property type="evidence" value="ECO:0007669"/>
    <property type="project" value="UniProtKB-KW"/>
</dbReference>
<dbReference type="GO" id="GO:0016887">
    <property type="term" value="F:ATP hydrolysis activity"/>
    <property type="evidence" value="ECO:0007669"/>
    <property type="project" value="InterPro"/>
</dbReference>
<dbReference type="GO" id="GO:0043565">
    <property type="term" value="F:sequence-specific DNA binding"/>
    <property type="evidence" value="ECO:0007669"/>
    <property type="project" value="InterPro"/>
</dbReference>
<dbReference type="GO" id="GO:0000160">
    <property type="term" value="P:phosphorelay signal transduction system"/>
    <property type="evidence" value="ECO:0007669"/>
    <property type="project" value="UniProtKB-KW"/>
</dbReference>
<dbReference type="GO" id="GO:0006355">
    <property type="term" value="P:regulation of DNA-templated transcription"/>
    <property type="evidence" value="ECO:0007669"/>
    <property type="project" value="InterPro"/>
</dbReference>
<dbReference type="CDD" id="cd00009">
    <property type="entry name" value="AAA"/>
    <property type="match status" value="1"/>
</dbReference>
<dbReference type="FunFam" id="1.10.8.60:FF:000014">
    <property type="entry name" value="DNA-binding transcriptional regulator NtrC"/>
    <property type="match status" value="1"/>
</dbReference>
<dbReference type="FunFam" id="3.40.50.2300:FF:000018">
    <property type="entry name" value="DNA-binding transcriptional regulator NtrC"/>
    <property type="match status" value="1"/>
</dbReference>
<dbReference type="FunFam" id="3.40.50.300:FF:000006">
    <property type="entry name" value="DNA-binding transcriptional regulator NtrC"/>
    <property type="match status" value="1"/>
</dbReference>
<dbReference type="Gene3D" id="1.10.8.60">
    <property type="match status" value="1"/>
</dbReference>
<dbReference type="Gene3D" id="3.40.50.2300">
    <property type="match status" value="1"/>
</dbReference>
<dbReference type="Gene3D" id="1.10.10.60">
    <property type="entry name" value="Homeodomain-like"/>
    <property type="match status" value="1"/>
</dbReference>
<dbReference type="Gene3D" id="3.40.50.300">
    <property type="entry name" value="P-loop containing nucleotide triphosphate hydrolases"/>
    <property type="match status" value="1"/>
</dbReference>
<dbReference type="InterPro" id="IPR003593">
    <property type="entry name" value="AAA+_ATPase"/>
</dbReference>
<dbReference type="InterPro" id="IPR011006">
    <property type="entry name" value="CheY-like_superfamily"/>
</dbReference>
<dbReference type="InterPro" id="IPR009057">
    <property type="entry name" value="Homeodomain-like_sf"/>
</dbReference>
<dbReference type="InterPro" id="IPR002197">
    <property type="entry name" value="HTH_Fis"/>
</dbReference>
<dbReference type="InterPro" id="IPR027417">
    <property type="entry name" value="P-loop_NTPase"/>
</dbReference>
<dbReference type="InterPro" id="IPR001789">
    <property type="entry name" value="Sig_transdc_resp-reg_receiver"/>
</dbReference>
<dbReference type="InterPro" id="IPR002078">
    <property type="entry name" value="Sigma_54_int"/>
</dbReference>
<dbReference type="InterPro" id="IPR025662">
    <property type="entry name" value="Sigma_54_int_dom_ATP-bd_1"/>
</dbReference>
<dbReference type="InterPro" id="IPR025943">
    <property type="entry name" value="Sigma_54_int_dom_ATP-bd_2"/>
</dbReference>
<dbReference type="InterPro" id="IPR025944">
    <property type="entry name" value="Sigma_54_int_dom_CS"/>
</dbReference>
<dbReference type="NCBIfam" id="NF007689">
    <property type="entry name" value="PRK10365.1"/>
    <property type="match status" value="1"/>
</dbReference>
<dbReference type="PANTHER" id="PTHR32071:SF117">
    <property type="entry name" value="PTS-DEPENDENT DIHYDROXYACETONE KINASE OPERON REGULATORY PROTEIN-RELATED"/>
    <property type="match status" value="1"/>
</dbReference>
<dbReference type="PANTHER" id="PTHR32071">
    <property type="entry name" value="TRANSCRIPTIONAL REGULATORY PROTEIN"/>
    <property type="match status" value="1"/>
</dbReference>
<dbReference type="Pfam" id="PF02954">
    <property type="entry name" value="HTH_8"/>
    <property type="match status" value="1"/>
</dbReference>
<dbReference type="Pfam" id="PF00072">
    <property type="entry name" value="Response_reg"/>
    <property type="match status" value="1"/>
</dbReference>
<dbReference type="Pfam" id="PF00158">
    <property type="entry name" value="Sigma54_activat"/>
    <property type="match status" value="1"/>
</dbReference>
<dbReference type="PRINTS" id="PR01590">
    <property type="entry name" value="HTHFIS"/>
</dbReference>
<dbReference type="SMART" id="SM00382">
    <property type="entry name" value="AAA"/>
    <property type="match status" value="1"/>
</dbReference>
<dbReference type="SMART" id="SM00448">
    <property type="entry name" value="REC"/>
    <property type="match status" value="1"/>
</dbReference>
<dbReference type="SUPFAM" id="SSF52172">
    <property type="entry name" value="CheY-like"/>
    <property type="match status" value="1"/>
</dbReference>
<dbReference type="SUPFAM" id="SSF46689">
    <property type="entry name" value="Homeodomain-like"/>
    <property type="match status" value="1"/>
</dbReference>
<dbReference type="SUPFAM" id="SSF52540">
    <property type="entry name" value="P-loop containing nucleoside triphosphate hydrolases"/>
    <property type="match status" value="1"/>
</dbReference>
<dbReference type="PROSITE" id="PS50110">
    <property type="entry name" value="RESPONSE_REGULATORY"/>
    <property type="match status" value="1"/>
</dbReference>
<dbReference type="PROSITE" id="PS00675">
    <property type="entry name" value="SIGMA54_INTERACT_1"/>
    <property type="match status" value="1"/>
</dbReference>
<dbReference type="PROSITE" id="PS00676">
    <property type="entry name" value="SIGMA54_INTERACT_2"/>
    <property type="match status" value="1"/>
</dbReference>
<dbReference type="PROSITE" id="PS00688">
    <property type="entry name" value="SIGMA54_INTERACT_3"/>
    <property type="match status" value="1"/>
</dbReference>
<dbReference type="PROSITE" id="PS50045">
    <property type="entry name" value="SIGMA54_INTERACT_4"/>
    <property type="match status" value="1"/>
</dbReference>
<reference key="1">
    <citation type="journal article" date="2001" name="Nature">
        <title>Genome sequence of enterohaemorrhagic Escherichia coli O157:H7.</title>
        <authorList>
            <person name="Perna N.T."/>
            <person name="Plunkett G. III"/>
            <person name="Burland V."/>
            <person name="Mau B."/>
            <person name="Glasner J.D."/>
            <person name="Rose D.J."/>
            <person name="Mayhew G.F."/>
            <person name="Evans P.S."/>
            <person name="Gregor J."/>
            <person name="Kirkpatrick H.A."/>
            <person name="Posfai G."/>
            <person name="Hackett J."/>
            <person name="Klink S."/>
            <person name="Boutin A."/>
            <person name="Shao Y."/>
            <person name="Miller L."/>
            <person name="Grotbeck E.J."/>
            <person name="Davis N.W."/>
            <person name="Lim A."/>
            <person name="Dimalanta E.T."/>
            <person name="Potamousis K."/>
            <person name="Apodaca J."/>
            <person name="Anantharaman T.S."/>
            <person name="Lin J."/>
            <person name="Yen G."/>
            <person name="Schwartz D.C."/>
            <person name="Welch R.A."/>
            <person name="Blattner F.R."/>
        </authorList>
    </citation>
    <scope>NUCLEOTIDE SEQUENCE [LARGE SCALE GENOMIC DNA]</scope>
    <source>
        <strain>O157:H7 / EDL933 / ATCC 700927 / EHEC</strain>
    </source>
</reference>
<reference key="2">
    <citation type="journal article" date="2001" name="DNA Res.">
        <title>Complete genome sequence of enterohemorrhagic Escherichia coli O157:H7 and genomic comparison with a laboratory strain K-12.</title>
        <authorList>
            <person name="Hayashi T."/>
            <person name="Makino K."/>
            <person name="Ohnishi M."/>
            <person name="Kurokawa K."/>
            <person name="Ishii K."/>
            <person name="Yokoyama K."/>
            <person name="Han C.-G."/>
            <person name="Ohtsubo E."/>
            <person name="Nakayama K."/>
            <person name="Murata T."/>
            <person name="Tanaka M."/>
            <person name="Tobe T."/>
            <person name="Iida T."/>
            <person name="Takami H."/>
            <person name="Honda T."/>
            <person name="Sasakawa C."/>
            <person name="Ogasawara N."/>
            <person name="Yasunaga T."/>
            <person name="Kuhara S."/>
            <person name="Shiba T."/>
            <person name="Hattori M."/>
            <person name="Shinagawa H."/>
        </authorList>
    </citation>
    <scope>NUCLEOTIDE SEQUENCE [LARGE SCALE GENOMIC DNA]</scope>
    <source>
        <strain>O157:H7 / Sakai / RIMD 0509952 / EHEC</strain>
    </source>
</reference>
<comment type="function">
    <text evidence="2">Part of the Zra signaling pathway, an envelope stress response (ESR) system composed of the periplasmic accessory protein ZraP, the histidine kinase ZraS and the transcriptional regulator ZraR. The ZraPSR system contributes to antibiotic resistance and is important for membrane integrity in the presence of membrane-targeting biocides. ZraR is a member of the two-component regulatory system ZraS/ZraR. When activated by ZraS, acts in conjunction with sigma-54 to regulate the expression of zraP in the presence of high Zn(2+) or Pb(2+) concentrations. Also positively autoregulates the expression of the zraSR operon.</text>
</comment>
<comment type="activity regulation">
    <text evidence="2">Activity of the ZraS/ZraR two-component system is repressed by the zinc-bound form of ZraP, which probably interacts with the periplasmic region of ZraS.</text>
</comment>
<comment type="subcellular location">
    <subcellularLocation>
        <location evidence="2">Cytoplasm</location>
    </subcellularLocation>
</comment>
<comment type="PTM">
    <text evidence="2">Phosphorylated by ZraS.</text>
</comment>
<accession>Q8X613</accession>
<organism>
    <name type="scientific">Escherichia coli O157:H7</name>
    <dbReference type="NCBI Taxonomy" id="83334"/>
    <lineage>
        <taxon>Bacteria</taxon>
        <taxon>Pseudomonadati</taxon>
        <taxon>Pseudomonadota</taxon>
        <taxon>Gammaproteobacteria</taxon>
        <taxon>Enterobacterales</taxon>
        <taxon>Enterobacteriaceae</taxon>
        <taxon>Escherichia</taxon>
    </lineage>
</organism>
<keyword id="KW-0010">Activator</keyword>
<keyword id="KW-0067">ATP-binding</keyword>
<keyword id="KW-0963">Cytoplasm</keyword>
<keyword id="KW-0238">DNA-binding</keyword>
<keyword id="KW-0547">Nucleotide-binding</keyword>
<keyword id="KW-0597">Phosphoprotein</keyword>
<keyword id="KW-1185">Reference proteome</keyword>
<keyword id="KW-0346">Stress response</keyword>
<keyword id="KW-0804">Transcription</keyword>
<keyword id="KW-0805">Transcription regulation</keyword>
<keyword id="KW-0902">Two-component regulatory system</keyword>
<proteinExistence type="inferred from homology"/>
<sequence>MTHDNIDILVVDDDISHCTILQALLRGWGYNVALANSGRQALEQVRERVFDLVLCDVRMAEMDGIATLKEIKALNPAIPVLIMTAYSSVETAVEALKTGALDYLIKPLDFDNLQATLEKALAHTHIIDAETPAVTASQFGMVGKSPAMQHLLSEIALVAPSEATVLIHGDSGTGKELVARAIHASSARSEKPLVTLNCAALNESLLESELFGHEKGAFTGADKRREGRFVEADGGTLFLDEIGDISPMMLVRLLRAIQEREVQRVGSNQTISVDVRLIAATHRDLAAEVNAGRFRQDLYYRLNVVAIEVPSLRQRREDIPLLAGHFLQRFAERNRKAVKGFTPQAMDLLIHYDWPGNIRELENAVERAVVLLTGEYISERELPLAIASTPIPLAQSLDIQPLVEVEKEVILAALEKTGGNKTEAARQLGITRKTLLAKLSR</sequence>
<name>ZRAR_ECO57</name>
<protein>
    <recommendedName>
        <fullName>Transcriptional regulatory protein ZraR</fullName>
    </recommendedName>
</protein>
<feature type="chain" id="PRO_0000081280" description="Transcriptional regulatory protein ZraR">
    <location>
        <begin position="1"/>
        <end position="441"/>
    </location>
</feature>
<feature type="domain" description="Response regulatory" evidence="4">
    <location>
        <begin position="7"/>
        <end position="121"/>
    </location>
</feature>
<feature type="domain" description="Sigma-54 factor interaction" evidence="5">
    <location>
        <begin position="141"/>
        <end position="370"/>
    </location>
</feature>
<feature type="DNA-binding region" description="H-T-H motif" evidence="1">
    <location>
        <begin position="421"/>
        <end position="440"/>
    </location>
</feature>
<feature type="binding site" evidence="3">
    <location>
        <position position="172"/>
    </location>
    <ligand>
        <name>ATP</name>
        <dbReference type="ChEBI" id="CHEBI:30616"/>
    </ligand>
</feature>
<feature type="binding site" evidence="3">
    <location>
        <position position="173"/>
    </location>
    <ligand>
        <name>ATP</name>
        <dbReference type="ChEBI" id="CHEBI:30616"/>
    </ligand>
</feature>
<feature type="binding site" evidence="3">
    <location>
        <position position="329"/>
    </location>
    <ligand>
        <name>ATP</name>
        <dbReference type="ChEBI" id="CHEBI:30616"/>
    </ligand>
</feature>
<feature type="binding site" evidence="3">
    <location>
        <position position="359"/>
    </location>
    <ligand>
        <name>ATP</name>
        <dbReference type="ChEBI" id="CHEBI:30616"/>
    </ligand>
</feature>
<feature type="modified residue" description="4-aspartylphosphate" evidence="4">
    <location>
        <position position="56"/>
    </location>
</feature>
<evidence type="ECO:0000250" key="1"/>
<evidence type="ECO:0000250" key="2">
    <source>
        <dbReference type="UniProtKB" id="P14375"/>
    </source>
</evidence>
<evidence type="ECO:0000250" key="3">
    <source>
        <dbReference type="UniProtKB" id="P25852"/>
    </source>
</evidence>
<evidence type="ECO:0000255" key="4">
    <source>
        <dbReference type="PROSITE-ProRule" id="PRU00169"/>
    </source>
</evidence>
<evidence type="ECO:0000255" key="5">
    <source>
        <dbReference type="PROSITE-ProRule" id="PRU00193"/>
    </source>
</evidence>
<gene>
    <name type="primary">zraR</name>
    <name type="synonym">hydG</name>
    <name type="ordered locus">Z5580</name>
    <name type="ordered locus">ECs4927</name>
</gene>